<feature type="chain" id="PRO_1000052486" description="Large ribosomal subunit protein uL4">
    <location>
        <begin position="1"/>
        <end position="207"/>
    </location>
</feature>
<comment type="function">
    <text evidence="1">One of the primary rRNA binding proteins, this protein initially binds near the 5'-end of the 23S rRNA. It is important during the early stages of 50S assembly. It makes multiple contacts with different domains of the 23S rRNA in the assembled 50S subunit and ribosome.</text>
</comment>
<comment type="function">
    <text evidence="1">Forms part of the polypeptide exit tunnel.</text>
</comment>
<comment type="subunit">
    <text evidence="1">Part of the 50S ribosomal subunit.</text>
</comment>
<comment type="similarity">
    <text evidence="1">Belongs to the universal ribosomal protein uL4 family.</text>
</comment>
<accession>A8GT68</accession>
<sequence>MKTKILSLANEEVGEISLNEDIFAVEFIRDDIIKQVIDWQRAKAMSGNHKTKTVSEVLGTTKKPFKQKGTGNARQGSLRSVQMRGGGVAHGPRVRSHATKLPKKVRKLGLIHALSEKCAEGKLLVIDSLKLDKPKTSALVNILNKFQGKSFFVIDGNEVDINFSLAAKNIYNTVVVPQIGANVYDIIRHEYVLLSQEAVSVLEERLR</sequence>
<organism>
    <name type="scientific">Rickettsia rickettsii (strain Sheila Smith)</name>
    <dbReference type="NCBI Taxonomy" id="392021"/>
    <lineage>
        <taxon>Bacteria</taxon>
        <taxon>Pseudomonadati</taxon>
        <taxon>Pseudomonadota</taxon>
        <taxon>Alphaproteobacteria</taxon>
        <taxon>Rickettsiales</taxon>
        <taxon>Rickettsiaceae</taxon>
        <taxon>Rickettsieae</taxon>
        <taxon>Rickettsia</taxon>
        <taxon>spotted fever group</taxon>
    </lineage>
</organism>
<evidence type="ECO:0000255" key="1">
    <source>
        <dbReference type="HAMAP-Rule" id="MF_01328"/>
    </source>
</evidence>
<evidence type="ECO:0000305" key="2"/>
<proteinExistence type="inferred from homology"/>
<gene>
    <name evidence="1" type="primary">rplD</name>
    <name type="ordered locus">A1G_05550</name>
</gene>
<name>RL4_RICRS</name>
<protein>
    <recommendedName>
        <fullName evidence="1">Large ribosomal subunit protein uL4</fullName>
    </recommendedName>
    <alternativeName>
        <fullName evidence="2">50S ribosomal protein L4</fullName>
    </alternativeName>
</protein>
<keyword id="KW-0687">Ribonucleoprotein</keyword>
<keyword id="KW-0689">Ribosomal protein</keyword>
<keyword id="KW-0694">RNA-binding</keyword>
<keyword id="KW-0699">rRNA-binding</keyword>
<dbReference type="EMBL" id="CP000848">
    <property type="protein sequence ID" value="ABV76593.1"/>
    <property type="molecule type" value="Genomic_DNA"/>
</dbReference>
<dbReference type="RefSeq" id="WP_012151151.1">
    <property type="nucleotide sequence ID" value="NZ_CP121767.1"/>
</dbReference>
<dbReference type="SMR" id="A8GT68"/>
<dbReference type="GeneID" id="79937669"/>
<dbReference type="KEGG" id="rri:A1G_05550"/>
<dbReference type="HOGENOM" id="CLU_041575_5_1_5"/>
<dbReference type="Proteomes" id="UP000006832">
    <property type="component" value="Chromosome"/>
</dbReference>
<dbReference type="GO" id="GO:1990904">
    <property type="term" value="C:ribonucleoprotein complex"/>
    <property type="evidence" value="ECO:0007669"/>
    <property type="project" value="UniProtKB-KW"/>
</dbReference>
<dbReference type="GO" id="GO:0005840">
    <property type="term" value="C:ribosome"/>
    <property type="evidence" value="ECO:0007669"/>
    <property type="project" value="UniProtKB-KW"/>
</dbReference>
<dbReference type="GO" id="GO:0019843">
    <property type="term" value="F:rRNA binding"/>
    <property type="evidence" value="ECO:0007669"/>
    <property type="project" value="UniProtKB-UniRule"/>
</dbReference>
<dbReference type="GO" id="GO:0003735">
    <property type="term" value="F:structural constituent of ribosome"/>
    <property type="evidence" value="ECO:0007669"/>
    <property type="project" value="InterPro"/>
</dbReference>
<dbReference type="GO" id="GO:0006412">
    <property type="term" value="P:translation"/>
    <property type="evidence" value="ECO:0007669"/>
    <property type="project" value="UniProtKB-UniRule"/>
</dbReference>
<dbReference type="FunFam" id="3.40.1370.10:FF:000015">
    <property type="entry name" value="50S ribosomal protein L4"/>
    <property type="match status" value="1"/>
</dbReference>
<dbReference type="Gene3D" id="3.40.1370.10">
    <property type="match status" value="1"/>
</dbReference>
<dbReference type="HAMAP" id="MF_01328_B">
    <property type="entry name" value="Ribosomal_uL4_B"/>
    <property type="match status" value="1"/>
</dbReference>
<dbReference type="InterPro" id="IPR002136">
    <property type="entry name" value="Ribosomal_uL4"/>
</dbReference>
<dbReference type="InterPro" id="IPR013005">
    <property type="entry name" value="Ribosomal_uL4-like"/>
</dbReference>
<dbReference type="InterPro" id="IPR023574">
    <property type="entry name" value="Ribosomal_uL4_dom_sf"/>
</dbReference>
<dbReference type="NCBIfam" id="TIGR03953">
    <property type="entry name" value="rplD_bact"/>
    <property type="match status" value="1"/>
</dbReference>
<dbReference type="PANTHER" id="PTHR10746">
    <property type="entry name" value="50S RIBOSOMAL PROTEIN L4"/>
    <property type="match status" value="1"/>
</dbReference>
<dbReference type="PANTHER" id="PTHR10746:SF6">
    <property type="entry name" value="LARGE RIBOSOMAL SUBUNIT PROTEIN UL4M"/>
    <property type="match status" value="1"/>
</dbReference>
<dbReference type="Pfam" id="PF00573">
    <property type="entry name" value="Ribosomal_L4"/>
    <property type="match status" value="1"/>
</dbReference>
<dbReference type="SUPFAM" id="SSF52166">
    <property type="entry name" value="Ribosomal protein L4"/>
    <property type="match status" value="1"/>
</dbReference>
<reference key="1">
    <citation type="submission" date="2007-09" db="EMBL/GenBank/DDBJ databases">
        <title>Complete genome sequence of Rickettsia rickettsii.</title>
        <authorList>
            <person name="Madan A."/>
            <person name="Fahey J."/>
            <person name="Helton E."/>
            <person name="Ketteman M."/>
            <person name="Madan A."/>
            <person name="Rodrigues S."/>
            <person name="Sanchez A."/>
            <person name="Dasch G."/>
            <person name="Eremeeva M."/>
        </authorList>
    </citation>
    <scope>NUCLEOTIDE SEQUENCE [LARGE SCALE GENOMIC DNA]</scope>
    <source>
        <strain>Sheila Smith</strain>
    </source>
</reference>